<organism>
    <name type="scientific">Bos taurus</name>
    <name type="common">Bovine</name>
    <dbReference type="NCBI Taxonomy" id="9913"/>
    <lineage>
        <taxon>Eukaryota</taxon>
        <taxon>Metazoa</taxon>
        <taxon>Chordata</taxon>
        <taxon>Craniata</taxon>
        <taxon>Vertebrata</taxon>
        <taxon>Euteleostomi</taxon>
        <taxon>Mammalia</taxon>
        <taxon>Eutheria</taxon>
        <taxon>Laurasiatheria</taxon>
        <taxon>Artiodactyla</taxon>
        <taxon>Ruminantia</taxon>
        <taxon>Pecora</taxon>
        <taxon>Bovidae</taxon>
        <taxon>Bovinae</taxon>
        <taxon>Bos</taxon>
    </lineage>
</organism>
<evidence type="ECO:0000255" key="1"/>
<evidence type="ECO:0000255" key="2">
    <source>
        <dbReference type="PROSITE-ProRule" id="PRU00521"/>
    </source>
</evidence>
<evidence type="ECO:0000256" key="3">
    <source>
        <dbReference type="SAM" id="MobiDB-lite"/>
    </source>
</evidence>
<dbReference type="EMBL" id="U73043">
    <property type="protein sequence ID" value="AAB17282.1"/>
    <property type="molecule type" value="Genomic_DNA"/>
</dbReference>
<dbReference type="SMR" id="Q95137"/>
<dbReference type="STRING" id="9913.ENSBTAP00000052946"/>
<dbReference type="BindingDB" id="Q95137"/>
<dbReference type="GlyCosmos" id="Q95137">
    <property type="glycosylation" value="1 site, No reported glycans"/>
</dbReference>
<dbReference type="GlyGen" id="Q95137">
    <property type="glycosylation" value="1 site"/>
</dbReference>
<dbReference type="PaxDb" id="9913-ENSBTAP00000052946"/>
<dbReference type="eggNOG" id="KOG3656">
    <property type="taxonomic scope" value="Eukaryota"/>
</dbReference>
<dbReference type="HOGENOM" id="CLU_009579_11_0_1"/>
<dbReference type="InParanoid" id="Q95137"/>
<dbReference type="OrthoDB" id="6021915at2759"/>
<dbReference type="Proteomes" id="UP000009136">
    <property type="component" value="Unplaced"/>
</dbReference>
<dbReference type="GO" id="GO:0005886">
    <property type="term" value="C:plasma membrane"/>
    <property type="evidence" value="ECO:0000318"/>
    <property type="project" value="GO_Central"/>
</dbReference>
<dbReference type="GO" id="GO:0045202">
    <property type="term" value="C:synapse"/>
    <property type="evidence" value="ECO:0007669"/>
    <property type="project" value="GOC"/>
</dbReference>
<dbReference type="GO" id="GO:0001588">
    <property type="term" value="F:dopamine neurotransmitter receptor activity, coupled via Gs"/>
    <property type="evidence" value="ECO:0000318"/>
    <property type="project" value="GO_Central"/>
</dbReference>
<dbReference type="GO" id="GO:0004930">
    <property type="term" value="F:G protein-coupled receptor activity"/>
    <property type="evidence" value="ECO:0000318"/>
    <property type="project" value="GO_Central"/>
</dbReference>
<dbReference type="GO" id="GO:0071880">
    <property type="term" value="P:adenylate cyclase-activating adrenergic receptor signaling pathway"/>
    <property type="evidence" value="ECO:0000318"/>
    <property type="project" value="GO_Central"/>
</dbReference>
<dbReference type="GO" id="GO:0007212">
    <property type="term" value="P:G protein-coupled dopamine receptor signaling pathway"/>
    <property type="evidence" value="ECO:0000318"/>
    <property type="project" value="GO_Central"/>
</dbReference>
<dbReference type="GO" id="GO:0043410">
    <property type="term" value="P:positive regulation of MAPK cascade"/>
    <property type="evidence" value="ECO:0000318"/>
    <property type="project" value="GO_Central"/>
</dbReference>
<dbReference type="Gene3D" id="1.20.1070.10">
    <property type="entry name" value="Rhodopsin 7-helix transmembrane proteins"/>
    <property type="match status" value="1"/>
</dbReference>
<dbReference type="InterPro" id="IPR000276">
    <property type="entry name" value="GPCR_Rhodpsn"/>
</dbReference>
<dbReference type="InterPro" id="IPR017452">
    <property type="entry name" value="GPCR_Rhodpsn_7TM"/>
</dbReference>
<dbReference type="PANTHER" id="PTHR24248">
    <property type="entry name" value="ADRENERGIC RECEPTOR-RELATED G-PROTEIN COUPLED RECEPTOR"/>
    <property type="match status" value="1"/>
</dbReference>
<dbReference type="PANTHER" id="PTHR24248:SF136">
    <property type="entry name" value="D(1B) DOPAMINE RECEPTOR"/>
    <property type="match status" value="1"/>
</dbReference>
<dbReference type="Pfam" id="PF00001">
    <property type="entry name" value="7tm_1"/>
    <property type="match status" value="1"/>
</dbReference>
<dbReference type="PRINTS" id="PR00237">
    <property type="entry name" value="GPCRRHODOPSN"/>
</dbReference>
<dbReference type="SUPFAM" id="SSF81321">
    <property type="entry name" value="Family A G protein-coupled receptor-like"/>
    <property type="match status" value="1"/>
</dbReference>
<dbReference type="PROSITE" id="PS50262">
    <property type="entry name" value="G_PROTEIN_RECEP_F1_2"/>
    <property type="match status" value="1"/>
</dbReference>
<comment type="function">
    <text>Dopamine receptor whose activity is mediated by G proteins which activate adenylyl cyclase.</text>
</comment>
<comment type="subcellular location">
    <subcellularLocation>
        <location>Cell membrane</location>
        <topology>Multi-pass membrane protein</topology>
    </subcellularLocation>
</comment>
<comment type="similarity">
    <text evidence="2">Belongs to the G-protein coupled receptor 1 family.</text>
</comment>
<reference key="1">
    <citation type="journal article" date="1997" name="Neurosci. Lett.">
        <title>Molecular identification of a dopamine D1b receptor in bovine retinal pigment epithelium.</title>
        <authorList>
            <person name="Versaux-Botteri C."/>
            <person name="Gibert J.-M."/>
            <person name="Nguyen-Legros J."/>
            <person name="Vernier P."/>
        </authorList>
    </citation>
    <scope>NUCLEOTIDE SEQUENCE [GENOMIC DNA]</scope>
</reference>
<accession>Q95137</accession>
<protein>
    <recommendedName>
        <fullName>D(1B) dopamine receptor</fullName>
    </recommendedName>
    <alternativeName>
        <fullName>D(5) dopamine receptor</fullName>
    </alternativeName>
    <alternativeName>
        <fullName>Dopamine D5 receptor</fullName>
    </alternativeName>
</protein>
<gene>
    <name type="primary">DRD5</name>
    <name type="synonym">DRD1B</name>
</gene>
<keyword id="KW-1003">Cell membrane</keyword>
<keyword id="KW-0297">G-protein coupled receptor</keyword>
<keyword id="KW-0325">Glycoprotein</keyword>
<keyword id="KW-0472">Membrane</keyword>
<keyword id="KW-0675">Receptor</keyword>
<keyword id="KW-1185">Reference proteome</keyword>
<keyword id="KW-0807">Transducer</keyword>
<keyword id="KW-0812">Transmembrane</keyword>
<keyword id="KW-1133">Transmembrane helix</keyword>
<name>DRD5_BOVIN</name>
<sequence>SILNLCIISVDRYWAISRPFCYERKMTQRVALVMVGLAWTLSILISFIPVQLHWHRDKVGSRDGLDPPSNLANGTPWEEAGESDRSAENCDSSLNRTYAISSSLISFYIPVAIMIVTYTRIYRIAQVQIRRISSLERAAEHAQSCRSREACAPDSGLRASIKKETKVLKTLSVI</sequence>
<feature type="chain" id="PRO_0000069404" description="D(1B) dopamine receptor">
    <location>
        <begin position="1" status="less than"/>
        <end position="174" status="greater than"/>
    </location>
</feature>
<feature type="transmembrane region" description="Helical; Name=3" evidence="1">
    <location>
        <begin position="1" status="less than"/>
        <end position="10"/>
    </location>
</feature>
<feature type="topological domain" description="Cytoplasmic" evidence="1">
    <location>
        <begin position="11"/>
        <end position="32"/>
    </location>
</feature>
<feature type="transmembrane region" description="Helical; Name=4" evidence="1">
    <location>
        <begin position="33"/>
        <end position="54"/>
    </location>
</feature>
<feature type="topological domain" description="Extracellular" evidence="1">
    <location>
        <begin position="55"/>
        <end position="96"/>
    </location>
</feature>
<feature type="transmembrane region" description="Helical; Name=5" evidence="1">
    <location>
        <begin position="97"/>
        <end position="119"/>
    </location>
</feature>
<feature type="topological domain" description="Cytoplasmic" evidence="1">
    <location>
        <begin position="120"/>
        <end position="169"/>
    </location>
</feature>
<feature type="transmembrane region" description="Helical; Name=6" evidence="1">
    <location>
        <begin position="170"/>
        <end position="174" status="greater than"/>
    </location>
</feature>
<feature type="region of interest" description="Disordered" evidence="3">
    <location>
        <begin position="64"/>
        <end position="88"/>
    </location>
</feature>
<feature type="glycosylation site" description="N-linked (GlcNAc...) asparagine" evidence="1">
    <location>
        <position position="95"/>
    </location>
</feature>
<feature type="non-terminal residue">
    <location>
        <position position="1"/>
    </location>
</feature>
<feature type="non-terminal residue">
    <location>
        <position position="174"/>
    </location>
</feature>
<proteinExistence type="inferred from homology"/>